<name>TRMB_CHRSD</name>
<proteinExistence type="inferred from homology"/>
<reference key="1">
    <citation type="journal article" date="2011" name="Stand. Genomic Sci.">
        <title>Complete genome sequence of the halophilic and highly halotolerant Chromohalobacter salexigens type strain (1H11(T)).</title>
        <authorList>
            <person name="Copeland A."/>
            <person name="O'Connor K."/>
            <person name="Lucas S."/>
            <person name="Lapidus A."/>
            <person name="Berry K.W."/>
            <person name="Detter J.C."/>
            <person name="Del Rio T.G."/>
            <person name="Hammon N."/>
            <person name="Dalin E."/>
            <person name="Tice H."/>
            <person name="Pitluck S."/>
            <person name="Bruce D."/>
            <person name="Goodwin L."/>
            <person name="Han C."/>
            <person name="Tapia R."/>
            <person name="Saunders E."/>
            <person name="Schmutz J."/>
            <person name="Brettin T."/>
            <person name="Larimer F."/>
            <person name="Land M."/>
            <person name="Hauser L."/>
            <person name="Vargas C."/>
            <person name="Nieto J.J."/>
            <person name="Kyrpides N.C."/>
            <person name="Ivanova N."/>
            <person name="Goker M."/>
            <person name="Klenk H.P."/>
            <person name="Csonka L.N."/>
            <person name="Woyke T."/>
        </authorList>
    </citation>
    <scope>NUCLEOTIDE SEQUENCE [LARGE SCALE GENOMIC DNA]</scope>
    <source>
        <strain>ATCC BAA-138 / DSM 3043 / CIP 106854 / NCIMB 13768 / 1H11</strain>
    </source>
</reference>
<comment type="function">
    <text evidence="2">Catalyzes the formation of N(7)-methylguanine at position 46 (m7G46) in tRNA.</text>
</comment>
<comment type="catalytic activity">
    <reaction evidence="2">
        <text>guanosine(46) in tRNA + S-adenosyl-L-methionine = N(7)-methylguanosine(46) in tRNA + S-adenosyl-L-homocysteine</text>
        <dbReference type="Rhea" id="RHEA:42708"/>
        <dbReference type="Rhea" id="RHEA-COMP:10188"/>
        <dbReference type="Rhea" id="RHEA-COMP:10189"/>
        <dbReference type="ChEBI" id="CHEBI:57856"/>
        <dbReference type="ChEBI" id="CHEBI:59789"/>
        <dbReference type="ChEBI" id="CHEBI:74269"/>
        <dbReference type="ChEBI" id="CHEBI:74480"/>
        <dbReference type="EC" id="2.1.1.33"/>
    </reaction>
</comment>
<comment type="pathway">
    <text evidence="2">tRNA modification; N(7)-methylguanine-tRNA biosynthesis.</text>
</comment>
<comment type="similarity">
    <text evidence="2">Belongs to the class I-like SAM-binding methyltransferase superfamily. TrmB family.</text>
</comment>
<sequence length="246" mass="27368">MSDSSSSSENAPATPESPGRPPRGIKSYVLRAGRMTAAQSRGLEEVWPRLGLSVAEGRQSLEALFGRRAPCVVEVGFGMGQSLVEQAAANPETDFIGIEVHAPGVGKLLDEADKRGLTNLRVYRDDALEVLDKCLPESSLTGLQLFFPDPWPKKKHHKRRIVQPAFVELVRTRLAPHGYLHMATDWEAYAEHMVEVMEEAPGYRNTAPPESAPYVPRPEFRPLTKFESRGERLGHGVWDLIYARVE</sequence>
<keyword id="KW-0489">Methyltransferase</keyword>
<keyword id="KW-1185">Reference proteome</keyword>
<keyword id="KW-0949">S-adenosyl-L-methionine</keyword>
<keyword id="KW-0808">Transferase</keyword>
<keyword id="KW-0819">tRNA processing</keyword>
<evidence type="ECO:0000250" key="1"/>
<evidence type="ECO:0000255" key="2">
    <source>
        <dbReference type="HAMAP-Rule" id="MF_01057"/>
    </source>
</evidence>
<evidence type="ECO:0000256" key="3">
    <source>
        <dbReference type="SAM" id="MobiDB-lite"/>
    </source>
</evidence>
<protein>
    <recommendedName>
        <fullName evidence="2">tRNA (guanine-N(7)-)-methyltransferase</fullName>
        <ecNumber evidence="2">2.1.1.33</ecNumber>
    </recommendedName>
    <alternativeName>
        <fullName evidence="2">tRNA (guanine(46)-N(7))-methyltransferase</fullName>
    </alternativeName>
    <alternativeName>
        <fullName evidence="2">tRNA(m7G46)-methyltransferase</fullName>
    </alternativeName>
</protein>
<feature type="chain" id="PRO_0000288137" description="tRNA (guanine-N(7)-)-methyltransferase">
    <location>
        <begin position="1"/>
        <end position="246"/>
    </location>
</feature>
<feature type="region of interest" description="Disordered" evidence="3">
    <location>
        <begin position="1"/>
        <end position="26"/>
    </location>
</feature>
<feature type="active site" evidence="1">
    <location>
        <position position="149"/>
    </location>
</feature>
<feature type="binding site" evidence="2">
    <location>
        <position position="74"/>
    </location>
    <ligand>
        <name>S-adenosyl-L-methionine</name>
        <dbReference type="ChEBI" id="CHEBI:59789"/>
    </ligand>
</feature>
<feature type="binding site" evidence="2">
    <location>
        <position position="99"/>
    </location>
    <ligand>
        <name>S-adenosyl-L-methionine</name>
        <dbReference type="ChEBI" id="CHEBI:59789"/>
    </ligand>
</feature>
<feature type="binding site" evidence="2">
    <location>
        <position position="126"/>
    </location>
    <ligand>
        <name>S-adenosyl-L-methionine</name>
        <dbReference type="ChEBI" id="CHEBI:59789"/>
    </ligand>
</feature>
<feature type="binding site" evidence="2">
    <location>
        <position position="149"/>
    </location>
    <ligand>
        <name>S-adenosyl-L-methionine</name>
        <dbReference type="ChEBI" id="CHEBI:59789"/>
    </ligand>
</feature>
<feature type="binding site" evidence="2">
    <location>
        <position position="153"/>
    </location>
    <ligand>
        <name>substrate</name>
    </ligand>
</feature>
<feature type="binding site" evidence="2">
    <location>
        <position position="185"/>
    </location>
    <ligand>
        <name>substrate</name>
    </ligand>
</feature>
<feature type="binding site" evidence="2">
    <location>
        <begin position="224"/>
        <end position="227"/>
    </location>
    <ligand>
        <name>substrate</name>
    </ligand>
</feature>
<organism>
    <name type="scientific">Chromohalobacter salexigens (strain ATCC BAA-138 / DSM 3043 / CIP 106854 / NCIMB 13768 / 1H11)</name>
    <dbReference type="NCBI Taxonomy" id="290398"/>
    <lineage>
        <taxon>Bacteria</taxon>
        <taxon>Pseudomonadati</taxon>
        <taxon>Pseudomonadota</taxon>
        <taxon>Gammaproteobacteria</taxon>
        <taxon>Oceanospirillales</taxon>
        <taxon>Halomonadaceae</taxon>
        <taxon>Chromohalobacter</taxon>
    </lineage>
</organism>
<dbReference type="EC" id="2.1.1.33" evidence="2"/>
<dbReference type="EMBL" id="CP000285">
    <property type="protein sequence ID" value="ABE60489.1"/>
    <property type="molecule type" value="Genomic_DNA"/>
</dbReference>
<dbReference type="RefSeq" id="WP_011508435.1">
    <property type="nucleotide sequence ID" value="NC_007963.1"/>
</dbReference>
<dbReference type="SMR" id="Q1QSR9"/>
<dbReference type="STRING" id="290398.Csal_3145"/>
<dbReference type="GeneID" id="95335840"/>
<dbReference type="KEGG" id="csa:Csal_3145"/>
<dbReference type="eggNOG" id="COG0220">
    <property type="taxonomic scope" value="Bacteria"/>
</dbReference>
<dbReference type="HOGENOM" id="CLU_050910_0_1_6"/>
<dbReference type="OrthoDB" id="9802090at2"/>
<dbReference type="UniPathway" id="UPA00989"/>
<dbReference type="Proteomes" id="UP000000239">
    <property type="component" value="Chromosome"/>
</dbReference>
<dbReference type="GO" id="GO:0043527">
    <property type="term" value="C:tRNA methyltransferase complex"/>
    <property type="evidence" value="ECO:0007669"/>
    <property type="project" value="TreeGrafter"/>
</dbReference>
<dbReference type="GO" id="GO:0008176">
    <property type="term" value="F:tRNA (guanine(46)-N7)-methyltransferase activity"/>
    <property type="evidence" value="ECO:0007669"/>
    <property type="project" value="UniProtKB-UniRule"/>
</dbReference>
<dbReference type="Gene3D" id="3.40.50.150">
    <property type="entry name" value="Vaccinia Virus protein VP39"/>
    <property type="match status" value="1"/>
</dbReference>
<dbReference type="HAMAP" id="MF_01057">
    <property type="entry name" value="tRNA_methyltr_TrmB"/>
    <property type="match status" value="1"/>
</dbReference>
<dbReference type="InterPro" id="IPR029063">
    <property type="entry name" value="SAM-dependent_MTases_sf"/>
</dbReference>
<dbReference type="InterPro" id="IPR003358">
    <property type="entry name" value="tRNA_(Gua-N-7)_MeTrfase_Trmb"/>
</dbReference>
<dbReference type="InterPro" id="IPR055361">
    <property type="entry name" value="tRNA_methyltr_TrmB_bact"/>
</dbReference>
<dbReference type="NCBIfam" id="TIGR00091">
    <property type="entry name" value="tRNA (guanosine(46)-N7)-methyltransferase TrmB"/>
    <property type="match status" value="1"/>
</dbReference>
<dbReference type="PANTHER" id="PTHR23417">
    <property type="entry name" value="3-DEOXY-D-MANNO-OCTULOSONIC-ACID TRANSFERASE/TRNA GUANINE-N 7 - -METHYLTRANSFERASE"/>
    <property type="match status" value="1"/>
</dbReference>
<dbReference type="PANTHER" id="PTHR23417:SF14">
    <property type="entry name" value="PENTACOTRIPEPTIDE-REPEAT REGION OF PRORP DOMAIN-CONTAINING PROTEIN"/>
    <property type="match status" value="1"/>
</dbReference>
<dbReference type="Pfam" id="PF02390">
    <property type="entry name" value="Methyltransf_4"/>
    <property type="match status" value="1"/>
</dbReference>
<dbReference type="SUPFAM" id="SSF53335">
    <property type="entry name" value="S-adenosyl-L-methionine-dependent methyltransferases"/>
    <property type="match status" value="1"/>
</dbReference>
<dbReference type="PROSITE" id="PS51625">
    <property type="entry name" value="SAM_MT_TRMB"/>
    <property type="match status" value="1"/>
</dbReference>
<gene>
    <name evidence="2" type="primary">trmB</name>
    <name type="ordered locus">Csal_3145</name>
</gene>
<accession>Q1QSR9</accession>